<organism>
    <name type="scientific">Bacillus subtilis (strain 168)</name>
    <dbReference type="NCBI Taxonomy" id="224308"/>
    <lineage>
        <taxon>Bacteria</taxon>
        <taxon>Bacillati</taxon>
        <taxon>Bacillota</taxon>
        <taxon>Bacilli</taxon>
        <taxon>Bacillales</taxon>
        <taxon>Bacillaceae</taxon>
        <taxon>Bacillus</taxon>
    </lineage>
</organism>
<sequence length="831" mass="96260">MRLKTPMKAIHKNLLLTRTGDVWAYYRIKSNSIPMQNKEKVESYKKKWQHLFEEITSYEDFHLMMYPSEYELEKRFKDLETDIAADAMDVARYYNEETVRLLEQRLGRLTKYDFILGVKLKSSLVNISVELKDNILSFFNTATDTVVKMLGWEQNVSTSFFEKYEEVEETLANIMASVRGERLSETEMTYINRYHFVRGLKHQTNEESEIKDVRSITNTIIDPTDPSVLHLHSDQDEGYSAFVVIDEFLHNMSESDLFYEAQSLPFPVEVQMKIQTESKSITKPALNLKRQQLKEEQKEQQSTGDRSDVSTVTSATMIRHLQDEIKKEDVHVMNWLSVIVVHGKTKKECVGKATIVKRHLKGAGITCRLPVADQLNLFYKMLPGEKLDITDKNWIQKTTQDGVAESLFAVNSDIGSKIGFFLGWVDRFQEHTDLESAIMSSRDFVLFHPFLANQQLKGSKTRSPHCLITGDTGNGKSYLAKLIFNYISMLNIKSLYIDPKKEMRKWIQRVLNDEYIRENFPLYIAHLEKYNYITLDHENTHNWGALDPISFLPPMKAKELVQVIFEQVYDFKGKDDINTAFLRATSEVIDAKQKGEQVGSLDIIRKMQSHPEEAVQKAGDYLNEVVSDSILKLCIHDGSNPALSLEKRITILEVENMDLPDHAERLENYTISQLKSSAVMFALGKFCELFGMNQDEQTVEFIDEAWIFTTSQQGKKVERQMRRIGRSYNNAEYFISQSTKDALKEEDSGNFGVAFAFDEPNEREEVLKWMNMEVTKDNKKMMESMFQGQCLFKDYYGRTSKISIECLFEEWQGALKTVEKKAVAYAEEKYL</sequence>
<gene>
    <name type="primary">yddE</name>
    <name type="ordered locus">BSU04940</name>
</gene>
<protein>
    <recommendedName>
        <fullName>Uncharacterized protein YddE</fullName>
    </recommendedName>
</protein>
<accession>P96642</accession>
<accession>Q797J5</accession>
<reference key="1">
    <citation type="submission" date="1997-03" db="EMBL/GenBank/DDBJ databases">
        <title>A 148 kbp sequence of the region between 35 and 47 degree of the Bacillus subtilis genome.</title>
        <authorList>
            <person name="Kasahara Y."/>
            <person name="Nakai S."/>
            <person name="Lee S."/>
            <person name="Sadaie Y."/>
            <person name="Ogasawara N."/>
        </authorList>
    </citation>
    <scope>NUCLEOTIDE SEQUENCE [GENOMIC DNA]</scope>
    <source>
        <strain>168</strain>
    </source>
</reference>
<reference key="2">
    <citation type="journal article" date="1997" name="Nature">
        <title>The complete genome sequence of the Gram-positive bacterium Bacillus subtilis.</title>
        <authorList>
            <person name="Kunst F."/>
            <person name="Ogasawara N."/>
            <person name="Moszer I."/>
            <person name="Albertini A.M."/>
            <person name="Alloni G."/>
            <person name="Azevedo V."/>
            <person name="Bertero M.G."/>
            <person name="Bessieres P."/>
            <person name="Bolotin A."/>
            <person name="Borchert S."/>
            <person name="Borriss R."/>
            <person name="Boursier L."/>
            <person name="Brans A."/>
            <person name="Braun M."/>
            <person name="Brignell S.C."/>
            <person name="Bron S."/>
            <person name="Brouillet S."/>
            <person name="Bruschi C.V."/>
            <person name="Caldwell B."/>
            <person name="Capuano V."/>
            <person name="Carter N.M."/>
            <person name="Choi S.-K."/>
            <person name="Codani J.-J."/>
            <person name="Connerton I.F."/>
            <person name="Cummings N.J."/>
            <person name="Daniel R.A."/>
            <person name="Denizot F."/>
            <person name="Devine K.M."/>
            <person name="Duesterhoeft A."/>
            <person name="Ehrlich S.D."/>
            <person name="Emmerson P.T."/>
            <person name="Entian K.-D."/>
            <person name="Errington J."/>
            <person name="Fabret C."/>
            <person name="Ferrari E."/>
            <person name="Foulger D."/>
            <person name="Fritz C."/>
            <person name="Fujita M."/>
            <person name="Fujita Y."/>
            <person name="Fuma S."/>
            <person name="Galizzi A."/>
            <person name="Galleron N."/>
            <person name="Ghim S.-Y."/>
            <person name="Glaser P."/>
            <person name="Goffeau A."/>
            <person name="Golightly E.J."/>
            <person name="Grandi G."/>
            <person name="Guiseppi G."/>
            <person name="Guy B.J."/>
            <person name="Haga K."/>
            <person name="Haiech J."/>
            <person name="Harwood C.R."/>
            <person name="Henaut A."/>
            <person name="Hilbert H."/>
            <person name="Holsappel S."/>
            <person name="Hosono S."/>
            <person name="Hullo M.-F."/>
            <person name="Itaya M."/>
            <person name="Jones L.-M."/>
            <person name="Joris B."/>
            <person name="Karamata D."/>
            <person name="Kasahara Y."/>
            <person name="Klaerr-Blanchard M."/>
            <person name="Klein C."/>
            <person name="Kobayashi Y."/>
            <person name="Koetter P."/>
            <person name="Koningstein G."/>
            <person name="Krogh S."/>
            <person name="Kumano M."/>
            <person name="Kurita K."/>
            <person name="Lapidus A."/>
            <person name="Lardinois S."/>
            <person name="Lauber J."/>
            <person name="Lazarevic V."/>
            <person name="Lee S.-M."/>
            <person name="Levine A."/>
            <person name="Liu H."/>
            <person name="Masuda S."/>
            <person name="Mauel C."/>
            <person name="Medigue C."/>
            <person name="Medina N."/>
            <person name="Mellado R.P."/>
            <person name="Mizuno M."/>
            <person name="Moestl D."/>
            <person name="Nakai S."/>
            <person name="Noback M."/>
            <person name="Noone D."/>
            <person name="O'Reilly M."/>
            <person name="Ogawa K."/>
            <person name="Ogiwara A."/>
            <person name="Oudega B."/>
            <person name="Park S.-H."/>
            <person name="Parro V."/>
            <person name="Pohl T.M."/>
            <person name="Portetelle D."/>
            <person name="Porwollik S."/>
            <person name="Prescott A.M."/>
            <person name="Presecan E."/>
            <person name="Pujic P."/>
            <person name="Purnelle B."/>
            <person name="Rapoport G."/>
            <person name="Rey M."/>
            <person name="Reynolds S."/>
            <person name="Rieger M."/>
            <person name="Rivolta C."/>
            <person name="Rocha E."/>
            <person name="Roche B."/>
            <person name="Rose M."/>
            <person name="Sadaie Y."/>
            <person name="Sato T."/>
            <person name="Scanlan E."/>
            <person name="Schleich S."/>
            <person name="Schroeter R."/>
            <person name="Scoffone F."/>
            <person name="Sekiguchi J."/>
            <person name="Sekowska A."/>
            <person name="Seror S.J."/>
            <person name="Serror P."/>
            <person name="Shin B.-S."/>
            <person name="Soldo B."/>
            <person name="Sorokin A."/>
            <person name="Tacconi E."/>
            <person name="Takagi T."/>
            <person name="Takahashi H."/>
            <person name="Takemaru K."/>
            <person name="Takeuchi M."/>
            <person name="Tamakoshi A."/>
            <person name="Tanaka T."/>
            <person name="Terpstra P."/>
            <person name="Tognoni A."/>
            <person name="Tosato V."/>
            <person name="Uchiyama S."/>
            <person name="Vandenbol M."/>
            <person name="Vannier F."/>
            <person name="Vassarotti A."/>
            <person name="Viari A."/>
            <person name="Wambutt R."/>
            <person name="Wedler E."/>
            <person name="Wedler H."/>
            <person name="Weitzenegger T."/>
            <person name="Winters P."/>
            <person name="Wipat A."/>
            <person name="Yamamoto H."/>
            <person name="Yamane K."/>
            <person name="Yasumoto K."/>
            <person name="Yata K."/>
            <person name="Yoshida K."/>
            <person name="Yoshikawa H.-F."/>
            <person name="Zumstein E."/>
            <person name="Yoshikawa H."/>
            <person name="Danchin A."/>
        </authorList>
    </citation>
    <scope>NUCLEOTIDE SEQUENCE [LARGE SCALE GENOMIC DNA]</scope>
    <source>
        <strain>168</strain>
    </source>
</reference>
<proteinExistence type="predicted"/>
<name>YDDE_BACSU</name>
<dbReference type="EMBL" id="AB001488">
    <property type="protein sequence ID" value="BAA19331.1"/>
    <property type="molecule type" value="Genomic_DNA"/>
</dbReference>
<dbReference type="EMBL" id="AL009126">
    <property type="protein sequence ID" value="CAB12301.3"/>
    <property type="molecule type" value="Genomic_DNA"/>
</dbReference>
<dbReference type="PIR" id="F69775">
    <property type="entry name" value="F69775"/>
</dbReference>
<dbReference type="RefSeq" id="NP_388375.2">
    <property type="nucleotide sequence ID" value="NC_000964.3"/>
</dbReference>
<dbReference type="FunCoup" id="P96642">
    <property type="interactions" value="102"/>
</dbReference>
<dbReference type="STRING" id="224308.BSU04940"/>
<dbReference type="PaxDb" id="224308-BSU04940"/>
<dbReference type="EnsemblBacteria" id="CAB12301">
    <property type="protein sequence ID" value="CAB12301"/>
    <property type="gene ID" value="BSU_04940"/>
</dbReference>
<dbReference type="GeneID" id="938130"/>
<dbReference type="KEGG" id="bsu:BSU04940"/>
<dbReference type="eggNOG" id="COG0433">
    <property type="taxonomic scope" value="Bacteria"/>
</dbReference>
<dbReference type="InParanoid" id="P96642"/>
<dbReference type="OrthoDB" id="1647424at2"/>
<dbReference type="BioCyc" id="BSUB:BSU04940-MONOMER"/>
<dbReference type="Proteomes" id="UP000001570">
    <property type="component" value="Chromosome"/>
</dbReference>
<dbReference type="GO" id="GO:0060187">
    <property type="term" value="C:cell pole"/>
    <property type="evidence" value="ECO:0000314"/>
    <property type="project" value="CACAO"/>
</dbReference>
<dbReference type="GO" id="GO:0005524">
    <property type="term" value="F:ATP binding"/>
    <property type="evidence" value="ECO:0007669"/>
    <property type="project" value="UniProtKB-KW"/>
</dbReference>
<dbReference type="GO" id="GO:0009291">
    <property type="term" value="P:unidirectional conjugation"/>
    <property type="evidence" value="ECO:0000315"/>
    <property type="project" value="CACAO"/>
</dbReference>
<dbReference type="FunFam" id="3.40.50.300:FF:004524">
    <property type="entry name" value="AAA-like domain-containing protein"/>
    <property type="match status" value="1"/>
</dbReference>
<dbReference type="Gene3D" id="3.40.50.300">
    <property type="entry name" value="P-loop containing nucleotide triphosphate hydrolases"/>
    <property type="match status" value="2"/>
</dbReference>
<dbReference type="InterPro" id="IPR016628">
    <property type="entry name" value="ATPase_SAG2001_prd"/>
</dbReference>
<dbReference type="InterPro" id="IPR027417">
    <property type="entry name" value="P-loop_NTPase"/>
</dbReference>
<dbReference type="InterPro" id="IPR051162">
    <property type="entry name" value="T4SS_component"/>
</dbReference>
<dbReference type="PANTHER" id="PTHR30121:SF6">
    <property type="entry name" value="SLR6007 PROTEIN"/>
    <property type="match status" value="1"/>
</dbReference>
<dbReference type="PANTHER" id="PTHR30121">
    <property type="entry name" value="UNCHARACTERIZED PROTEIN YJGR-RELATED"/>
    <property type="match status" value="1"/>
</dbReference>
<dbReference type="Pfam" id="PF12846">
    <property type="entry name" value="AAA_10"/>
    <property type="match status" value="1"/>
</dbReference>
<dbReference type="PIRSF" id="PIRSF015040">
    <property type="entry name" value="ATPase_SAG2001_prd"/>
    <property type="match status" value="1"/>
</dbReference>
<dbReference type="SUPFAM" id="SSF52540">
    <property type="entry name" value="P-loop containing nucleoside triphosphate hydrolases"/>
    <property type="match status" value="1"/>
</dbReference>
<feature type="chain" id="PRO_0000360444" description="Uncharacterized protein YddE">
    <location>
        <begin position="1"/>
        <end position="831"/>
    </location>
</feature>
<feature type="region of interest" description="Disordered" evidence="2">
    <location>
        <begin position="285"/>
        <end position="311"/>
    </location>
</feature>
<feature type="binding site" evidence="1">
    <location>
        <begin position="470"/>
        <end position="477"/>
    </location>
    <ligand>
        <name>ATP</name>
        <dbReference type="ChEBI" id="CHEBI:30616"/>
    </ligand>
</feature>
<evidence type="ECO:0000255" key="1"/>
<evidence type="ECO:0000256" key="2">
    <source>
        <dbReference type="SAM" id="MobiDB-lite"/>
    </source>
</evidence>
<keyword id="KW-0067">ATP-binding</keyword>
<keyword id="KW-0547">Nucleotide-binding</keyword>
<keyword id="KW-1185">Reference proteome</keyword>